<gene>
    <name evidence="1" type="primary">prfC</name>
    <name type="ordered locus">SPy_1416</name>
    <name type="ordered locus">M5005_Spy1155</name>
</gene>
<name>RF3_STRP1</name>
<evidence type="ECO:0000255" key="1">
    <source>
        <dbReference type="HAMAP-Rule" id="MF_00072"/>
    </source>
</evidence>
<proteinExistence type="inferred from homology"/>
<protein>
    <recommendedName>
        <fullName evidence="1">Peptide chain release factor 3</fullName>
        <shortName evidence="1">RF-3</shortName>
    </recommendedName>
</protein>
<accession>P66021</accession>
<accession>Q48Y02</accession>
<accession>Q99Z37</accession>
<sequence length="514" mass="58271">MSLTEEIKKRRTFAIISHPDAGKTTITEQLLYFGGEIREAGTVKGKKSGTFAKSDWMDIEKQRGISVTSSVMQFDYAGKRVNILDTPGHEDFSEDTYRTLMAVDAAVMVVDSAKGIEAQTKKLFEVVKHRNIPVFTFINKLDRDGREPLELLEELEEVLGIASYPMNWPIGMGRAFEGLYDLHNKRLELYKGDERFASIEDGDQLFANNPFYEQVKEDIELLQEAGNDFSEQAILDGDLTPVFFGSALTNFGVQTFLDTFLEFAPEPHGHKTTEGNVVDPLAKDFSGFVFKIQANMDPKHRDRIAFVRIVSGEFERGMGVNLTRTGKGAKLSNVTQFMAESRENVTNAVAGDIIGVYDTGTYQVGDTLTVGKNKFEFEPLPTFTPEIFMKVSPKNVMKQKSFHKGIEQLVQEGAIQLYKNYQTGEYMLGAVGQLQFEVFKHRMEGEYNAEVVMTPMGKKTVRWISEDDLDQRMSSSRNILAKDRFDQPVFLFENDFALRWFADKYPDVTLEEKM</sequence>
<feature type="chain" id="PRO_0000210974" description="Peptide chain release factor 3">
    <location>
        <begin position="1"/>
        <end position="514"/>
    </location>
</feature>
<feature type="domain" description="tr-type G">
    <location>
        <begin position="8"/>
        <end position="268"/>
    </location>
</feature>
<feature type="binding site" evidence="1">
    <location>
        <begin position="17"/>
        <end position="24"/>
    </location>
    <ligand>
        <name>GTP</name>
        <dbReference type="ChEBI" id="CHEBI:37565"/>
    </ligand>
</feature>
<feature type="binding site" evidence="1">
    <location>
        <begin position="85"/>
        <end position="89"/>
    </location>
    <ligand>
        <name>GTP</name>
        <dbReference type="ChEBI" id="CHEBI:37565"/>
    </ligand>
</feature>
<feature type="binding site" evidence="1">
    <location>
        <begin position="139"/>
        <end position="142"/>
    </location>
    <ligand>
        <name>GTP</name>
        <dbReference type="ChEBI" id="CHEBI:37565"/>
    </ligand>
</feature>
<reference key="1">
    <citation type="journal article" date="2001" name="Proc. Natl. Acad. Sci. U.S.A.">
        <title>Complete genome sequence of an M1 strain of Streptococcus pyogenes.</title>
        <authorList>
            <person name="Ferretti J.J."/>
            <person name="McShan W.M."/>
            <person name="Ajdic D.J."/>
            <person name="Savic D.J."/>
            <person name="Savic G."/>
            <person name="Lyon K."/>
            <person name="Primeaux C."/>
            <person name="Sezate S."/>
            <person name="Suvorov A.N."/>
            <person name="Kenton S."/>
            <person name="Lai H.S."/>
            <person name="Lin S.P."/>
            <person name="Qian Y."/>
            <person name="Jia H.G."/>
            <person name="Najar F.Z."/>
            <person name="Ren Q."/>
            <person name="Zhu H."/>
            <person name="Song L."/>
            <person name="White J."/>
            <person name="Yuan X."/>
            <person name="Clifton S.W."/>
            <person name="Roe B.A."/>
            <person name="McLaughlin R.E."/>
        </authorList>
    </citation>
    <scope>NUCLEOTIDE SEQUENCE [LARGE SCALE GENOMIC DNA]</scope>
    <source>
        <strain>ATCC 700294 / SF370 / Serotype M1</strain>
    </source>
</reference>
<reference key="2">
    <citation type="journal article" date="2005" name="J. Infect. Dis.">
        <title>Evolutionary origin and emergence of a highly successful clone of serotype M1 group A Streptococcus involved multiple horizontal gene transfer events.</title>
        <authorList>
            <person name="Sumby P."/>
            <person name="Porcella S.F."/>
            <person name="Madrigal A.G."/>
            <person name="Barbian K.D."/>
            <person name="Virtaneva K."/>
            <person name="Ricklefs S.M."/>
            <person name="Sturdevant D.E."/>
            <person name="Graham M.R."/>
            <person name="Vuopio-Varkila J."/>
            <person name="Hoe N.P."/>
            <person name="Musser J.M."/>
        </authorList>
    </citation>
    <scope>NUCLEOTIDE SEQUENCE [LARGE SCALE GENOMIC DNA]</scope>
    <source>
        <strain>ATCC BAA-947 / MGAS5005 / Serotype M1</strain>
    </source>
</reference>
<keyword id="KW-0963">Cytoplasm</keyword>
<keyword id="KW-0342">GTP-binding</keyword>
<keyword id="KW-0547">Nucleotide-binding</keyword>
<keyword id="KW-0648">Protein biosynthesis</keyword>
<keyword id="KW-1185">Reference proteome</keyword>
<comment type="function">
    <text evidence="1">Increases the formation of ribosomal termination complexes and stimulates activities of RF-1 and RF-2. It binds guanine nucleotides and has strong preference for UGA stop codons. It may interact directly with the ribosome. The stimulation of RF-1 and RF-2 is significantly reduced by GTP and GDP, but not by GMP.</text>
</comment>
<comment type="subcellular location">
    <subcellularLocation>
        <location evidence="1">Cytoplasm</location>
    </subcellularLocation>
</comment>
<comment type="similarity">
    <text evidence="1">Belongs to the TRAFAC class translation factor GTPase superfamily. Classic translation factor GTPase family. PrfC subfamily.</text>
</comment>
<organism>
    <name type="scientific">Streptococcus pyogenes serotype M1</name>
    <dbReference type="NCBI Taxonomy" id="301447"/>
    <lineage>
        <taxon>Bacteria</taxon>
        <taxon>Bacillati</taxon>
        <taxon>Bacillota</taxon>
        <taxon>Bacilli</taxon>
        <taxon>Lactobacillales</taxon>
        <taxon>Streptococcaceae</taxon>
        <taxon>Streptococcus</taxon>
    </lineage>
</organism>
<dbReference type="EMBL" id="AE004092">
    <property type="protein sequence ID" value="AAK34230.1"/>
    <property type="molecule type" value="Genomic_DNA"/>
</dbReference>
<dbReference type="EMBL" id="CP000017">
    <property type="protein sequence ID" value="AAZ51773.1"/>
    <property type="molecule type" value="Genomic_DNA"/>
</dbReference>
<dbReference type="RefSeq" id="NP_269509.1">
    <property type="nucleotide sequence ID" value="NC_002737.2"/>
</dbReference>
<dbReference type="SMR" id="P66021"/>
<dbReference type="PaxDb" id="1314-HKU360_01190"/>
<dbReference type="KEGG" id="spy:SPy_1416"/>
<dbReference type="KEGG" id="spz:M5005_Spy1155"/>
<dbReference type="PATRIC" id="fig|160490.10.peg.1234"/>
<dbReference type="HOGENOM" id="CLU_002794_2_1_9"/>
<dbReference type="OMA" id="GFVFKIH"/>
<dbReference type="Proteomes" id="UP000000750">
    <property type="component" value="Chromosome"/>
</dbReference>
<dbReference type="GO" id="GO:0005829">
    <property type="term" value="C:cytosol"/>
    <property type="evidence" value="ECO:0007669"/>
    <property type="project" value="TreeGrafter"/>
</dbReference>
<dbReference type="GO" id="GO:0005525">
    <property type="term" value="F:GTP binding"/>
    <property type="evidence" value="ECO:0007669"/>
    <property type="project" value="UniProtKB-UniRule"/>
</dbReference>
<dbReference type="GO" id="GO:0003924">
    <property type="term" value="F:GTPase activity"/>
    <property type="evidence" value="ECO:0007669"/>
    <property type="project" value="InterPro"/>
</dbReference>
<dbReference type="GO" id="GO:0016150">
    <property type="term" value="F:translation release factor activity, codon nonspecific"/>
    <property type="evidence" value="ECO:0007669"/>
    <property type="project" value="TreeGrafter"/>
</dbReference>
<dbReference type="GO" id="GO:0016149">
    <property type="term" value="F:translation release factor activity, codon specific"/>
    <property type="evidence" value="ECO:0007669"/>
    <property type="project" value="UniProtKB-UniRule"/>
</dbReference>
<dbReference type="GO" id="GO:0006449">
    <property type="term" value="P:regulation of translational termination"/>
    <property type="evidence" value="ECO:0007669"/>
    <property type="project" value="UniProtKB-UniRule"/>
</dbReference>
<dbReference type="CDD" id="cd04169">
    <property type="entry name" value="RF3"/>
    <property type="match status" value="1"/>
</dbReference>
<dbReference type="CDD" id="cd16259">
    <property type="entry name" value="RF3_III"/>
    <property type="match status" value="1"/>
</dbReference>
<dbReference type="FunFam" id="2.40.30.10:FF:000040">
    <property type="entry name" value="Peptide chain release factor 3"/>
    <property type="match status" value="1"/>
</dbReference>
<dbReference type="FunFam" id="3.30.70.3280:FF:000001">
    <property type="entry name" value="Peptide chain release factor 3"/>
    <property type="match status" value="1"/>
</dbReference>
<dbReference type="FunFam" id="3.40.50.300:FF:000542">
    <property type="entry name" value="Peptide chain release factor 3"/>
    <property type="match status" value="1"/>
</dbReference>
<dbReference type="Gene3D" id="3.40.50.300">
    <property type="entry name" value="P-loop containing nucleotide triphosphate hydrolases"/>
    <property type="match status" value="1"/>
</dbReference>
<dbReference type="Gene3D" id="3.30.70.3280">
    <property type="entry name" value="Peptide chain release factor 3, domain III"/>
    <property type="match status" value="1"/>
</dbReference>
<dbReference type="Gene3D" id="2.40.30.10">
    <property type="entry name" value="Translation factors"/>
    <property type="match status" value="1"/>
</dbReference>
<dbReference type="HAMAP" id="MF_00072">
    <property type="entry name" value="Rel_fac_3"/>
    <property type="match status" value="1"/>
</dbReference>
<dbReference type="InterPro" id="IPR053905">
    <property type="entry name" value="EF-G-like_DII"/>
</dbReference>
<dbReference type="InterPro" id="IPR035647">
    <property type="entry name" value="EFG_III/V"/>
</dbReference>
<dbReference type="InterPro" id="IPR031157">
    <property type="entry name" value="G_TR_CS"/>
</dbReference>
<dbReference type="InterPro" id="IPR027417">
    <property type="entry name" value="P-loop_NTPase"/>
</dbReference>
<dbReference type="InterPro" id="IPR004548">
    <property type="entry name" value="PrfC"/>
</dbReference>
<dbReference type="InterPro" id="IPR032090">
    <property type="entry name" value="RF3_C"/>
</dbReference>
<dbReference type="InterPro" id="IPR038467">
    <property type="entry name" value="RF3_dom_3_sf"/>
</dbReference>
<dbReference type="InterPro" id="IPR041732">
    <property type="entry name" value="RF3_GTP-bd"/>
</dbReference>
<dbReference type="InterPro" id="IPR005225">
    <property type="entry name" value="Small_GTP-bd"/>
</dbReference>
<dbReference type="InterPro" id="IPR000795">
    <property type="entry name" value="T_Tr_GTP-bd_dom"/>
</dbReference>
<dbReference type="InterPro" id="IPR009000">
    <property type="entry name" value="Transl_B-barrel_sf"/>
</dbReference>
<dbReference type="NCBIfam" id="TIGR00503">
    <property type="entry name" value="prfC"/>
    <property type="match status" value="1"/>
</dbReference>
<dbReference type="NCBIfam" id="NF001964">
    <property type="entry name" value="PRK00741.1"/>
    <property type="match status" value="1"/>
</dbReference>
<dbReference type="NCBIfam" id="TIGR00231">
    <property type="entry name" value="small_GTP"/>
    <property type="match status" value="1"/>
</dbReference>
<dbReference type="PANTHER" id="PTHR43556">
    <property type="entry name" value="PEPTIDE CHAIN RELEASE FACTOR RF3"/>
    <property type="match status" value="1"/>
</dbReference>
<dbReference type="PANTHER" id="PTHR43556:SF2">
    <property type="entry name" value="PEPTIDE CHAIN RELEASE FACTOR RF3"/>
    <property type="match status" value="1"/>
</dbReference>
<dbReference type="Pfam" id="PF22042">
    <property type="entry name" value="EF-G_D2"/>
    <property type="match status" value="1"/>
</dbReference>
<dbReference type="Pfam" id="PF00009">
    <property type="entry name" value="GTP_EFTU"/>
    <property type="match status" value="1"/>
</dbReference>
<dbReference type="Pfam" id="PF16658">
    <property type="entry name" value="RF3_C"/>
    <property type="match status" value="1"/>
</dbReference>
<dbReference type="PRINTS" id="PR00315">
    <property type="entry name" value="ELONGATNFCT"/>
</dbReference>
<dbReference type="PRINTS" id="PR01037">
    <property type="entry name" value="TCRTETOQM"/>
</dbReference>
<dbReference type="SUPFAM" id="SSF54980">
    <property type="entry name" value="EF-G C-terminal domain-like"/>
    <property type="match status" value="1"/>
</dbReference>
<dbReference type="SUPFAM" id="SSF52540">
    <property type="entry name" value="P-loop containing nucleoside triphosphate hydrolases"/>
    <property type="match status" value="1"/>
</dbReference>
<dbReference type="SUPFAM" id="SSF50447">
    <property type="entry name" value="Translation proteins"/>
    <property type="match status" value="1"/>
</dbReference>
<dbReference type="PROSITE" id="PS00301">
    <property type="entry name" value="G_TR_1"/>
    <property type="match status" value="1"/>
</dbReference>
<dbReference type="PROSITE" id="PS51722">
    <property type="entry name" value="G_TR_2"/>
    <property type="match status" value="1"/>
</dbReference>